<evidence type="ECO:0000255" key="1">
    <source>
        <dbReference type="HAMAP-Rule" id="MF_01080"/>
    </source>
</evidence>
<feature type="chain" id="PRO_1000084707" description="tRNA pseudouridine synthase B">
    <location>
        <begin position="1"/>
        <end position="299"/>
    </location>
</feature>
<feature type="active site" description="Nucleophile" evidence="1">
    <location>
        <position position="39"/>
    </location>
</feature>
<organism>
    <name type="scientific">Syntrophomonas wolfei subsp. wolfei (strain DSM 2245B / Goettingen)</name>
    <dbReference type="NCBI Taxonomy" id="335541"/>
    <lineage>
        <taxon>Bacteria</taxon>
        <taxon>Bacillati</taxon>
        <taxon>Bacillota</taxon>
        <taxon>Clostridia</taxon>
        <taxon>Eubacteriales</taxon>
        <taxon>Syntrophomonadaceae</taxon>
        <taxon>Syntrophomonas</taxon>
    </lineage>
</organism>
<comment type="function">
    <text evidence="1">Responsible for synthesis of pseudouridine from uracil-55 in the psi GC loop of transfer RNAs.</text>
</comment>
<comment type="catalytic activity">
    <reaction evidence="1">
        <text>uridine(55) in tRNA = pseudouridine(55) in tRNA</text>
        <dbReference type="Rhea" id="RHEA:42532"/>
        <dbReference type="Rhea" id="RHEA-COMP:10101"/>
        <dbReference type="Rhea" id="RHEA-COMP:10102"/>
        <dbReference type="ChEBI" id="CHEBI:65314"/>
        <dbReference type="ChEBI" id="CHEBI:65315"/>
        <dbReference type="EC" id="5.4.99.25"/>
    </reaction>
</comment>
<comment type="similarity">
    <text evidence="1">Belongs to the pseudouridine synthase TruB family. Type 1 subfamily.</text>
</comment>
<reference key="1">
    <citation type="journal article" date="2010" name="Environ. Microbiol.">
        <title>The genome of Syntrophomonas wolfei: new insights into syntrophic metabolism and biohydrogen production.</title>
        <authorList>
            <person name="Sieber J.R."/>
            <person name="Sims D.R."/>
            <person name="Han C."/>
            <person name="Kim E."/>
            <person name="Lykidis A."/>
            <person name="Lapidus A.L."/>
            <person name="McDonnald E."/>
            <person name="Rohlin L."/>
            <person name="Culley D.E."/>
            <person name="Gunsalus R."/>
            <person name="McInerney M.J."/>
        </authorList>
    </citation>
    <scope>NUCLEOTIDE SEQUENCE [LARGE SCALE GENOMIC DNA]</scope>
    <source>
        <strain>DSM 2245B / Goettingen</strain>
    </source>
</reference>
<dbReference type="EC" id="5.4.99.25" evidence="1"/>
<dbReference type="EMBL" id="CP000448">
    <property type="protein sequence ID" value="ABI68219.1"/>
    <property type="molecule type" value="Genomic_DNA"/>
</dbReference>
<dbReference type="RefSeq" id="WP_011640324.1">
    <property type="nucleotide sequence ID" value="NC_008346.1"/>
</dbReference>
<dbReference type="SMR" id="Q0AYI5"/>
<dbReference type="STRING" id="335541.Swol_0903"/>
<dbReference type="KEGG" id="swo:Swol_0903"/>
<dbReference type="eggNOG" id="COG0130">
    <property type="taxonomic scope" value="Bacteria"/>
</dbReference>
<dbReference type="HOGENOM" id="CLU_032087_0_3_9"/>
<dbReference type="OrthoDB" id="9802309at2"/>
<dbReference type="Proteomes" id="UP000001968">
    <property type="component" value="Chromosome"/>
</dbReference>
<dbReference type="GO" id="GO:0003723">
    <property type="term" value="F:RNA binding"/>
    <property type="evidence" value="ECO:0007669"/>
    <property type="project" value="InterPro"/>
</dbReference>
<dbReference type="GO" id="GO:0160148">
    <property type="term" value="F:tRNA pseudouridine(55) synthase activity"/>
    <property type="evidence" value="ECO:0007669"/>
    <property type="project" value="UniProtKB-EC"/>
</dbReference>
<dbReference type="GO" id="GO:1990481">
    <property type="term" value="P:mRNA pseudouridine synthesis"/>
    <property type="evidence" value="ECO:0007669"/>
    <property type="project" value="TreeGrafter"/>
</dbReference>
<dbReference type="GO" id="GO:0031119">
    <property type="term" value="P:tRNA pseudouridine synthesis"/>
    <property type="evidence" value="ECO:0007669"/>
    <property type="project" value="UniProtKB-UniRule"/>
</dbReference>
<dbReference type="CDD" id="cd02573">
    <property type="entry name" value="PseudoU_synth_EcTruB"/>
    <property type="match status" value="1"/>
</dbReference>
<dbReference type="Gene3D" id="3.30.2350.10">
    <property type="entry name" value="Pseudouridine synthase"/>
    <property type="match status" value="1"/>
</dbReference>
<dbReference type="HAMAP" id="MF_01080">
    <property type="entry name" value="TruB_bact"/>
    <property type="match status" value="1"/>
</dbReference>
<dbReference type="InterPro" id="IPR020103">
    <property type="entry name" value="PsdUridine_synth_cat_dom_sf"/>
</dbReference>
<dbReference type="InterPro" id="IPR002501">
    <property type="entry name" value="PsdUridine_synth_N"/>
</dbReference>
<dbReference type="InterPro" id="IPR014780">
    <property type="entry name" value="tRNA_psdUridine_synth_TruB"/>
</dbReference>
<dbReference type="InterPro" id="IPR032819">
    <property type="entry name" value="TruB_C"/>
</dbReference>
<dbReference type="NCBIfam" id="TIGR00431">
    <property type="entry name" value="TruB"/>
    <property type="match status" value="1"/>
</dbReference>
<dbReference type="PANTHER" id="PTHR13767:SF2">
    <property type="entry name" value="PSEUDOURIDYLATE SYNTHASE TRUB1"/>
    <property type="match status" value="1"/>
</dbReference>
<dbReference type="PANTHER" id="PTHR13767">
    <property type="entry name" value="TRNA-PSEUDOURIDINE SYNTHASE"/>
    <property type="match status" value="1"/>
</dbReference>
<dbReference type="Pfam" id="PF16198">
    <property type="entry name" value="TruB_C_2"/>
    <property type="match status" value="1"/>
</dbReference>
<dbReference type="Pfam" id="PF01509">
    <property type="entry name" value="TruB_N"/>
    <property type="match status" value="1"/>
</dbReference>
<dbReference type="SUPFAM" id="SSF55120">
    <property type="entry name" value="Pseudouridine synthase"/>
    <property type="match status" value="1"/>
</dbReference>
<accession>Q0AYI5</accession>
<proteinExistence type="inferred from homology"/>
<gene>
    <name evidence="1" type="primary">truB</name>
    <name type="ordered locus">Swol_0903</name>
</gene>
<sequence length="299" mass="33688">MHGFLNINKPQAMTSFDVIKKLKKVLPRKYKLGHLGTLDPMAEGVLPVAVGCGTRIIPFVEDETKEYIATMTLGASSDTQDAWGVITYHTPRKIEPAQVEKVLALFRGKSRQVPPMYSAVHHEGKRLYELARQGLEVERKAREIEIFELELLNADWEQELPQLSLRVSCSRGTYIRTLCHDIGQELGCGAYLSSLRRSRSGCFKIEEAVSLDYIIEKRENLSRALLPLDYPINNLPLISLKSAELPAIINGRQISRTGKLASPRVRLYTPEGQLLAIAEANNYNEDTVLQPCRVFKINE</sequence>
<protein>
    <recommendedName>
        <fullName evidence="1">tRNA pseudouridine synthase B</fullName>
        <ecNumber evidence="1">5.4.99.25</ecNumber>
    </recommendedName>
    <alternativeName>
        <fullName evidence="1">tRNA pseudouridine(55) synthase</fullName>
        <shortName evidence="1">Psi55 synthase</shortName>
    </alternativeName>
    <alternativeName>
        <fullName evidence="1">tRNA pseudouridylate synthase</fullName>
    </alternativeName>
    <alternativeName>
        <fullName evidence="1">tRNA-uridine isomerase</fullName>
    </alternativeName>
</protein>
<keyword id="KW-0413">Isomerase</keyword>
<keyword id="KW-1185">Reference proteome</keyword>
<keyword id="KW-0819">tRNA processing</keyword>
<name>TRUB_SYNWW</name>